<gene>
    <name evidence="1" type="primary">eno</name>
    <name type="ordered locus">SE_0561</name>
</gene>
<comment type="function">
    <text evidence="1">Catalyzes the reversible conversion of 2-phosphoglycerate (2-PG) into phosphoenolpyruvate (PEP). It is essential for the degradation of carbohydrates via glycolysis.</text>
</comment>
<comment type="catalytic activity">
    <reaction evidence="1">
        <text>(2R)-2-phosphoglycerate = phosphoenolpyruvate + H2O</text>
        <dbReference type="Rhea" id="RHEA:10164"/>
        <dbReference type="ChEBI" id="CHEBI:15377"/>
        <dbReference type="ChEBI" id="CHEBI:58289"/>
        <dbReference type="ChEBI" id="CHEBI:58702"/>
        <dbReference type="EC" id="4.2.1.11"/>
    </reaction>
</comment>
<comment type="cofactor">
    <cofactor evidence="1">
        <name>Mg(2+)</name>
        <dbReference type="ChEBI" id="CHEBI:18420"/>
    </cofactor>
    <text evidence="1">Binds a second Mg(2+) ion via substrate during catalysis.</text>
</comment>
<comment type="pathway">
    <text evidence="1">Carbohydrate degradation; glycolysis; pyruvate from D-glyceraldehyde 3-phosphate: step 4/5.</text>
</comment>
<comment type="subcellular location">
    <subcellularLocation>
        <location evidence="1">Cytoplasm</location>
    </subcellularLocation>
    <subcellularLocation>
        <location evidence="1">Secreted</location>
    </subcellularLocation>
    <subcellularLocation>
        <location evidence="1">Cell surface</location>
    </subcellularLocation>
    <text evidence="1">Fractions of enolase are present in both the cytoplasm and on the cell surface.</text>
</comment>
<comment type="similarity">
    <text evidence="1">Belongs to the enolase family.</text>
</comment>
<sequence length="434" mass="47247">MPIITDVYAREVLDSRGNPTVEVEVLTESGAFGRALVPSGASTGEHEAVELRDGDKSRYLGKGVTKAVENVNEMIAPEIVEGEFSVLDQVSIDKMMIQLDGTHNKGKLGANAILGVSIAVARAAADLLGQPLYKYLGGFNGKQLPVPMMNIVNGGSHSDAPIAFQEFMILPVGAESFKESLRWGAEIFHNLKSILSERGLETAVGDEGGFAPRFEGTEDAVETIIKAIEKAGYKPGEDVFLGFDCASSEFYENGVYDYTKFEGEHGAKRSAAEQVDYLEELIGKYPIITIEDGMDENDWEGWKQLTDRIGDKVQLVGDDLFVTNTEILSKGIEQGIGNSILIKVNQIGTLTETFDAIEMAQKAGYTAVVSHRSGETEDTTIADIAVATNAGQIKTGSLSRTDRIAKYNQLLRIEDELYETAKFEGIKSFYNLDK</sequence>
<organism>
    <name type="scientific">Staphylococcus epidermidis (strain ATCC 12228 / FDA PCI 1200)</name>
    <dbReference type="NCBI Taxonomy" id="176280"/>
    <lineage>
        <taxon>Bacteria</taxon>
        <taxon>Bacillati</taxon>
        <taxon>Bacillota</taxon>
        <taxon>Bacilli</taxon>
        <taxon>Bacillales</taxon>
        <taxon>Staphylococcaceae</taxon>
        <taxon>Staphylococcus</taxon>
    </lineage>
</organism>
<reference key="1">
    <citation type="journal article" date="2003" name="Mol. Microbiol.">
        <title>Genome-based analysis of virulence genes in a non-biofilm-forming Staphylococcus epidermidis strain (ATCC 12228).</title>
        <authorList>
            <person name="Zhang Y.-Q."/>
            <person name="Ren S.-X."/>
            <person name="Li H.-L."/>
            <person name="Wang Y.-X."/>
            <person name="Fu G."/>
            <person name="Yang J."/>
            <person name="Qin Z.-Q."/>
            <person name="Miao Y.-G."/>
            <person name="Wang W.-Y."/>
            <person name="Chen R.-S."/>
            <person name="Shen Y."/>
            <person name="Chen Z."/>
            <person name="Yuan Z.-H."/>
            <person name="Zhao G.-P."/>
            <person name="Qu D."/>
            <person name="Danchin A."/>
            <person name="Wen Y.-M."/>
        </authorList>
    </citation>
    <scope>NUCLEOTIDE SEQUENCE [LARGE SCALE GENOMIC DNA]</scope>
    <source>
        <strain>ATCC 12228 / FDA PCI 1200</strain>
    </source>
</reference>
<dbReference type="EC" id="4.2.1.11" evidence="1"/>
<dbReference type="EMBL" id="AE015929">
    <property type="protein sequence ID" value="AAO04158.1"/>
    <property type="molecule type" value="Genomic_DNA"/>
</dbReference>
<dbReference type="RefSeq" id="NP_764116.1">
    <property type="nucleotide sequence ID" value="NC_004461.1"/>
</dbReference>
<dbReference type="RefSeq" id="WP_001829595.1">
    <property type="nucleotide sequence ID" value="NZ_WBME01000030.1"/>
</dbReference>
<dbReference type="SMR" id="Q8CPY3"/>
<dbReference type="GeneID" id="50019291"/>
<dbReference type="KEGG" id="sep:SE_0561"/>
<dbReference type="PATRIC" id="fig|176280.10.peg.532"/>
<dbReference type="eggNOG" id="COG0148">
    <property type="taxonomic scope" value="Bacteria"/>
</dbReference>
<dbReference type="HOGENOM" id="CLU_031223_2_1_9"/>
<dbReference type="OrthoDB" id="9804716at2"/>
<dbReference type="UniPathway" id="UPA00109">
    <property type="reaction ID" value="UER00187"/>
</dbReference>
<dbReference type="Proteomes" id="UP000001411">
    <property type="component" value="Chromosome"/>
</dbReference>
<dbReference type="GO" id="GO:0009986">
    <property type="term" value="C:cell surface"/>
    <property type="evidence" value="ECO:0007669"/>
    <property type="project" value="UniProtKB-SubCell"/>
</dbReference>
<dbReference type="GO" id="GO:0005576">
    <property type="term" value="C:extracellular region"/>
    <property type="evidence" value="ECO:0007669"/>
    <property type="project" value="UniProtKB-SubCell"/>
</dbReference>
<dbReference type="GO" id="GO:0000015">
    <property type="term" value="C:phosphopyruvate hydratase complex"/>
    <property type="evidence" value="ECO:0007669"/>
    <property type="project" value="InterPro"/>
</dbReference>
<dbReference type="GO" id="GO:0000287">
    <property type="term" value="F:magnesium ion binding"/>
    <property type="evidence" value="ECO:0007669"/>
    <property type="project" value="UniProtKB-UniRule"/>
</dbReference>
<dbReference type="GO" id="GO:0004634">
    <property type="term" value="F:phosphopyruvate hydratase activity"/>
    <property type="evidence" value="ECO:0007669"/>
    <property type="project" value="UniProtKB-UniRule"/>
</dbReference>
<dbReference type="GO" id="GO:0006096">
    <property type="term" value="P:glycolytic process"/>
    <property type="evidence" value="ECO:0007669"/>
    <property type="project" value="UniProtKB-UniRule"/>
</dbReference>
<dbReference type="CDD" id="cd03313">
    <property type="entry name" value="enolase"/>
    <property type="match status" value="1"/>
</dbReference>
<dbReference type="FunFam" id="3.20.20.120:FF:000001">
    <property type="entry name" value="Enolase"/>
    <property type="match status" value="1"/>
</dbReference>
<dbReference type="FunFam" id="3.30.390.10:FF:000001">
    <property type="entry name" value="Enolase"/>
    <property type="match status" value="1"/>
</dbReference>
<dbReference type="Gene3D" id="3.20.20.120">
    <property type="entry name" value="Enolase-like C-terminal domain"/>
    <property type="match status" value="1"/>
</dbReference>
<dbReference type="Gene3D" id="3.30.390.10">
    <property type="entry name" value="Enolase-like, N-terminal domain"/>
    <property type="match status" value="1"/>
</dbReference>
<dbReference type="HAMAP" id="MF_00318">
    <property type="entry name" value="Enolase"/>
    <property type="match status" value="1"/>
</dbReference>
<dbReference type="InterPro" id="IPR000941">
    <property type="entry name" value="Enolase"/>
</dbReference>
<dbReference type="InterPro" id="IPR036849">
    <property type="entry name" value="Enolase-like_C_sf"/>
</dbReference>
<dbReference type="InterPro" id="IPR029017">
    <property type="entry name" value="Enolase-like_N"/>
</dbReference>
<dbReference type="InterPro" id="IPR020810">
    <property type="entry name" value="Enolase_C"/>
</dbReference>
<dbReference type="InterPro" id="IPR020809">
    <property type="entry name" value="Enolase_CS"/>
</dbReference>
<dbReference type="InterPro" id="IPR020811">
    <property type="entry name" value="Enolase_N"/>
</dbReference>
<dbReference type="NCBIfam" id="TIGR01060">
    <property type="entry name" value="eno"/>
    <property type="match status" value="1"/>
</dbReference>
<dbReference type="PANTHER" id="PTHR11902">
    <property type="entry name" value="ENOLASE"/>
    <property type="match status" value="1"/>
</dbReference>
<dbReference type="PANTHER" id="PTHR11902:SF1">
    <property type="entry name" value="ENOLASE"/>
    <property type="match status" value="1"/>
</dbReference>
<dbReference type="Pfam" id="PF00113">
    <property type="entry name" value="Enolase_C"/>
    <property type="match status" value="1"/>
</dbReference>
<dbReference type="Pfam" id="PF03952">
    <property type="entry name" value="Enolase_N"/>
    <property type="match status" value="1"/>
</dbReference>
<dbReference type="PIRSF" id="PIRSF001400">
    <property type="entry name" value="Enolase"/>
    <property type="match status" value="1"/>
</dbReference>
<dbReference type="PRINTS" id="PR00148">
    <property type="entry name" value="ENOLASE"/>
</dbReference>
<dbReference type="SFLD" id="SFLDS00001">
    <property type="entry name" value="Enolase"/>
    <property type="match status" value="1"/>
</dbReference>
<dbReference type="SFLD" id="SFLDF00002">
    <property type="entry name" value="enolase"/>
    <property type="match status" value="1"/>
</dbReference>
<dbReference type="SMART" id="SM01192">
    <property type="entry name" value="Enolase_C"/>
    <property type="match status" value="1"/>
</dbReference>
<dbReference type="SMART" id="SM01193">
    <property type="entry name" value="Enolase_N"/>
    <property type="match status" value="1"/>
</dbReference>
<dbReference type="SUPFAM" id="SSF51604">
    <property type="entry name" value="Enolase C-terminal domain-like"/>
    <property type="match status" value="1"/>
</dbReference>
<dbReference type="SUPFAM" id="SSF54826">
    <property type="entry name" value="Enolase N-terminal domain-like"/>
    <property type="match status" value="1"/>
</dbReference>
<dbReference type="PROSITE" id="PS00164">
    <property type="entry name" value="ENOLASE"/>
    <property type="match status" value="1"/>
</dbReference>
<name>ENO_STAES</name>
<evidence type="ECO:0000255" key="1">
    <source>
        <dbReference type="HAMAP-Rule" id="MF_00318"/>
    </source>
</evidence>
<proteinExistence type="inferred from homology"/>
<keyword id="KW-0963">Cytoplasm</keyword>
<keyword id="KW-0324">Glycolysis</keyword>
<keyword id="KW-0456">Lyase</keyword>
<keyword id="KW-0460">Magnesium</keyword>
<keyword id="KW-0479">Metal-binding</keyword>
<keyword id="KW-0964">Secreted</keyword>
<feature type="chain" id="PRO_0000133971" description="Enolase">
    <location>
        <begin position="1"/>
        <end position="434"/>
    </location>
</feature>
<feature type="active site" description="Proton donor" evidence="1">
    <location>
        <position position="207"/>
    </location>
</feature>
<feature type="active site" description="Proton acceptor" evidence="1">
    <location>
        <position position="343"/>
    </location>
</feature>
<feature type="binding site" evidence="1">
    <location>
        <position position="165"/>
    </location>
    <ligand>
        <name>(2R)-2-phosphoglycerate</name>
        <dbReference type="ChEBI" id="CHEBI:58289"/>
    </ligand>
</feature>
<feature type="binding site" evidence="1">
    <location>
        <position position="244"/>
    </location>
    <ligand>
        <name>Mg(2+)</name>
        <dbReference type="ChEBI" id="CHEBI:18420"/>
    </ligand>
</feature>
<feature type="binding site" evidence="1">
    <location>
        <position position="291"/>
    </location>
    <ligand>
        <name>Mg(2+)</name>
        <dbReference type="ChEBI" id="CHEBI:18420"/>
    </ligand>
</feature>
<feature type="binding site" evidence="1">
    <location>
        <position position="318"/>
    </location>
    <ligand>
        <name>Mg(2+)</name>
        <dbReference type="ChEBI" id="CHEBI:18420"/>
    </ligand>
</feature>
<feature type="binding site" evidence="1">
    <location>
        <position position="343"/>
    </location>
    <ligand>
        <name>(2R)-2-phosphoglycerate</name>
        <dbReference type="ChEBI" id="CHEBI:58289"/>
    </ligand>
</feature>
<feature type="binding site" evidence="1">
    <location>
        <position position="372"/>
    </location>
    <ligand>
        <name>(2R)-2-phosphoglycerate</name>
        <dbReference type="ChEBI" id="CHEBI:58289"/>
    </ligand>
</feature>
<feature type="binding site" evidence="1">
    <location>
        <position position="373"/>
    </location>
    <ligand>
        <name>(2R)-2-phosphoglycerate</name>
        <dbReference type="ChEBI" id="CHEBI:58289"/>
    </ligand>
</feature>
<feature type="binding site" evidence="1">
    <location>
        <position position="394"/>
    </location>
    <ligand>
        <name>(2R)-2-phosphoglycerate</name>
        <dbReference type="ChEBI" id="CHEBI:58289"/>
    </ligand>
</feature>
<accession>Q8CPY3</accession>
<protein>
    <recommendedName>
        <fullName evidence="1">Enolase</fullName>
        <ecNumber evidence="1">4.2.1.11</ecNumber>
    </recommendedName>
    <alternativeName>
        <fullName evidence="1">2-phospho-D-glycerate hydro-lyase</fullName>
    </alternativeName>
    <alternativeName>
        <fullName evidence="1">2-phosphoglycerate dehydratase</fullName>
    </alternativeName>
</protein>